<proteinExistence type="inferred from homology"/>
<accession>P63435</accession>
<accession>Q99SJ3</accession>
<protein>
    <recommendedName>
        <fullName evidence="1">3-isopropylmalate dehydratase large subunit</fullName>
        <ecNumber evidence="1">4.2.1.33</ecNumber>
    </recommendedName>
    <alternativeName>
        <fullName evidence="1">Alpha-IPM isomerase</fullName>
        <shortName evidence="1">IPMI</shortName>
    </alternativeName>
    <alternativeName>
        <fullName evidence="1">Isopropylmalate isomerase</fullName>
    </alternativeName>
</protein>
<name>LEUC_STAAM</name>
<sequence length="456" mass="50326">MGQTLFDKVWNRHVLYGKLGEPQLLYIDLHLIHEVTSPQAFEGLRLQNRKLRRPDLTFATLDHNVPTIDIFNIKDEIANKQITTLQKNAIDFGVHIFDMGSDEQGIVHMVGPETGLTQPGKTIVCGDSHTATHGAFGAIAFGIGTSEVEHVFATQTLWQTKPKNLKIDINGTLPTGVYAKDIILHLIKTYGVDFGTGYALEFTGETIKNLSMDGRMTICNMAIEGGAKYGIIQPDDITFEYVKGRPFADNFAKSVDKWRELYSDDDAIFDRVIELDVSTLEPQVTWGTNPEMGVNFSEPFPEINDINDQRAYDYMGLEPGQKAEDIDLGYVFLGSCTNARLSDLIEASHIVKGNKVHPNITAIVVPGSRTVKKEAEKLGLDTIFKNAGFEWREPGCSMCLGMNPDQVPEGVHCASTSNRNFEGRQGKGARTHLVSPAMAAAAAIHGKFVDVRKVVV</sequence>
<dbReference type="EC" id="4.2.1.33" evidence="1"/>
<dbReference type="EMBL" id="BA000017">
    <property type="protein sequence ID" value="BAB58221.1"/>
    <property type="molecule type" value="Genomic_DNA"/>
</dbReference>
<dbReference type="RefSeq" id="WP_000531823.1">
    <property type="nucleotide sequence ID" value="NC_002758.2"/>
</dbReference>
<dbReference type="SMR" id="P63435"/>
<dbReference type="KEGG" id="sav:SAV2059"/>
<dbReference type="HOGENOM" id="CLU_006714_3_4_9"/>
<dbReference type="PhylomeDB" id="P63435"/>
<dbReference type="UniPathway" id="UPA00048">
    <property type="reaction ID" value="UER00071"/>
</dbReference>
<dbReference type="Proteomes" id="UP000002481">
    <property type="component" value="Chromosome"/>
</dbReference>
<dbReference type="GO" id="GO:0003861">
    <property type="term" value="F:3-isopropylmalate dehydratase activity"/>
    <property type="evidence" value="ECO:0007669"/>
    <property type="project" value="UniProtKB-UniRule"/>
</dbReference>
<dbReference type="GO" id="GO:0051539">
    <property type="term" value="F:4 iron, 4 sulfur cluster binding"/>
    <property type="evidence" value="ECO:0007669"/>
    <property type="project" value="UniProtKB-KW"/>
</dbReference>
<dbReference type="GO" id="GO:0046872">
    <property type="term" value="F:metal ion binding"/>
    <property type="evidence" value="ECO:0007669"/>
    <property type="project" value="UniProtKB-KW"/>
</dbReference>
<dbReference type="GO" id="GO:0009098">
    <property type="term" value="P:L-leucine biosynthetic process"/>
    <property type="evidence" value="ECO:0007669"/>
    <property type="project" value="UniProtKB-UniRule"/>
</dbReference>
<dbReference type="CDD" id="cd01583">
    <property type="entry name" value="IPMI"/>
    <property type="match status" value="1"/>
</dbReference>
<dbReference type="Gene3D" id="3.30.499.10">
    <property type="entry name" value="Aconitase, domain 3"/>
    <property type="match status" value="2"/>
</dbReference>
<dbReference type="HAMAP" id="MF_01026">
    <property type="entry name" value="LeuC_type1"/>
    <property type="match status" value="1"/>
</dbReference>
<dbReference type="InterPro" id="IPR004430">
    <property type="entry name" value="3-IsopropMal_deHydase_lsu"/>
</dbReference>
<dbReference type="InterPro" id="IPR015931">
    <property type="entry name" value="Acnase/IPM_dHydase_lsu_aba_1/3"/>
</dbReference>
<dbReference type="InterPro" id="IPR001030">
    <property type="entry name" value="Acoase/IPM_deHydtase_lsu_aba"/>
</dbReference>
<dbReference type="InterPro" id="IPR018136">
    <property type="entry name" value="Aconitase_4Fe-4S_BS"/>
</dbReference>
<dbReference type="InterPro" id="IPR036008">
    <property type="entry name" value="Aconitase_4Fe-4S_dom"/>
</dbReference>
<dbReference type="InterPro" id="IPR050067">
    <property type="entry name" value="IPM_dehydratase_rel_enz"/>
</dbReference>
<dbReference type="InterPro" id="IPR033941">
    <property type="entry name" value="IPMI_cat"/>
</dbReference>
<dbReference type="NCBIfam" id="TIGR00170">
    <property type="entry name" value="leuC"/>
    <property type="match status" value="1"/>
</dbReference>
<dbReference type="NCBIfam" id="NF004016">
    <property type="entry name" value="PRK05478.1"/>
    <property type="match status" value="1"/>
</dbReference>
<dbReference type="NCBIfam" id="NF009116">
    <property type="entry name" value="PRK12466.1"/>
    <property type="match status" value="1"/>
</dbReference>
<dbReference type="PANTHER" id="PTHR43822:SF9">
    <property type="entry name" value="3-ISOPROPYLMALATE DEHYDRATASE"/>
    <property type="match status" value="1"/>
</dbReference>
<dbReference type="PANTHER" id="PTHR43822">
    <property type="entry name" value="HOMOACONITASE, MITOCHONDRIAL-RELATED"/>
    <property type="match status" value="1"/>
</dbReference>
<dbReference type="Pfam" id="PF00330">
    <property type="entry name" value="Aconitase"/>
    <property type="match status" value="1"/>
</dbReference>
<dbReference type="PRINTS" id="PR00415">
    <property type="entry name" value="ACONITASE"/>
</dbReference>
<dbReference type="SUPFAM" id="SSF53732">
    <property type="entry name" value="Aconitase iron-sulfur domain"/>
    <property type="match status" value="1"/>
</dbReference>
<dbReference type="PROSITE" id="PS00450">
    <property type="entry name" value="ACONITASE_1"/>
    <property type="match status" value="1"/>
</dbReference>
<dbReference type="PROSITE" id="PS01244">
    <property type="entry name" value="ACONITASE_2"/>
    <property type="match status" value="1"/>
</dbReference>
<reference key="1">
    <citation type="journal article" date="2001" name="Lancet">
        <title>Whole genome sequencing of meticillin-resistant Staphylococcus aureus.</title>
        <authorList>
            <person name="Kuroda M."/>
            <person name="Ohta T."/>
            <person name="Uchiyama I."/>
            <person name="Baba T."/>
            <person name="Yuzawa H."/>
            <person name="Kobayashi I."/>
            <person name="Cui L."/>
            <person name="Oguchi A."/>
            <person name="Aoki K."/>
            <person name="Nagai Y."/>
            <person name="Lian J.-Q."/>
            <person name="Ito T."/>
            <person name="Kanamori M."/>
            <person name="Matsumaru H."/>
            <person name="Maruyama A."/>
            <person name="Murakami H."/>
            <person name="Hosoyama A."/>
            <person name="Mizutani-Ui Y."/>
            <person name="Takahashi N.K."/>
            <person name="Sawano T."/>
            <person name="Inoue R."/>
            <person name="Kaito C."/>
            <person name="Sekimizu K."/>
            <person name="Hirakawa H."/>
            <person name="Kuhara S."/>
            <person name="Goto S."/>
            <person name="Yabuzaki J."/>
            <person name="Kanehisa M."/>
            <person name="Yamashita A."/>
            <person name="Oshima K."/>
            <person name="Furuya K."/>
            <person name="Yoshino C."/>
            <person name="Shiba T."/>
            <person name="Hattori M."/>
            <person name="Ogasawara N."/>
            <person name="Hayashi H."/>
            <person name="Hiramatsu K."/>
        </authorList>
    </citation>
    <scope>NUCLEOTIDE SEQUENCE [LARGE SCALE GENOMIC DNA]</scope>
    <source>
        <strain>Mu50 / ATCC 700699</strain>
    </source>
</reference>
<feature type="chain" id="PRO_0000076814" description="3-isopropylmalate dehydratase large subunit">
    <location>
        <begin position="1"/>
        <end position="456"/>
    </location>
</feature>
<feature type="binding site" evidence="1">
    <location>
        <position position="336"/>
    </location>
    <ligand>
        <name>[4Fe-4S] cluster</name>
        <dbReference type="ChEBI" id="CHEBI:49883"/>
    </ligand>
</feature>
<feature type="binding site" evidence="1">
    <location>
        <position position="396"/>
    </location>
    <ligand>
        <name>[4Fe-4S] cluster</name>
        <dbReference type="ChEBI" id="CHEBI:49883"/>
    </ligand>
</feature>
<feature type="binding site" evidence="1">
    <location>
        <position position="399"/>
    </location>
    <ligand>
        <name>[4Fe-4S] cluster</name>
        <dbReference type="ChEBI" id="CHEBI:49883"/>
    </ligand>
</feature>
<evidence type="ECO:0000255" key="1">
    <source>
        <dbReference type="HAMAP-Rule" id="MF_01026"/>
    </source>
</evidence>
<comment type="function">
    <text evidence="1">Catalyzes the isomerization between 2-isopropylmalate and 3-isopropylmalate, via the formation of 2-isopropylmaleate.</text>
</comment>
<comment type="catalytic activity">
    <reaction evidence="1">
        <text>(2R,3S)-3-isopropylmalate = (2S)-2-isopropylmalate</text>
        <dbReference type="Rhea" id="RHEA:32287"/>
        <dbReference type="ChEBI" id="CHEBI:1178"/>
        <dbReference type="ChEBI" id="CHEBI:35121"/>
        <dbReference type="EC" id="4.2.1.33"/>
    </reaction>
</comment>
<comment type="cofactor">
    <cofactor evidence="1">
        <name>[4Fe-4S] cluster</name>
        <dbReference type="ChEBI" id="CHEBI:49883"/>
    </cofactor>
    <text evidence="1">Binds 1 [4Fe-4S] cluster per subunit.</text>
</comment>
<comment type="pathway">
    <text evidence="1">Amino-acid biosynthesis; L-leucine biosynthesis; L-leucine from 3-methyl-2-oxobutanoate: step 2/4.</text>
</comment>
<comment type="subunit">
    <text evidence="1">Heterodimer of LeuC and LeuD.</text>
</comment>
<comment type="similarity">
    <text evidence="1">Belongs to the aconitase/IPM isomerase family. LeuC type 1 subfamily.</text>
</comment>
<organism>
    <name type="scientific">Staphylococcus aureus (strain Mu50 / ATCC 700699)</name>
    <dbReference type="NCBI Taxonomy" id="158878"/>
    <lineage>
        <taxon>Bacteria</taxon>
        <taxon>Bacillati</taxon>
        <taxon>Bacillota</taxon>
        <taxon>Bacilli</taxon>
        <taxon>Bacillales</taxon>
        <taxon>Staphylococcaceae</taxon>
        <taxon>Staphylococcus</taxon>
    </lineage>
</organism>
<keyword id="KW-0004">4Fe-4S</keyword>
<keyword id="KW-0028">Amino-acid biosynthesis</keyword>
<keyword id="KW-0100">Branched-chain amino acid biosynthesis</keyword>
<keyword id="KW-0408">Iron</keyword>
<keyword id="KW-0411">Iron-sulfur</keyword>
<keyword id="KW-0432">Leucine biosynthesis</keyword>
<keyword id="KW-0456">Lyase</keyword>
<keyword id="KW-0479">Metal-binding</keyword>
<gene>
    <name evidence="1" type="primary">leuC</name>
    <name type="ordered locus">SAV2059</name>
</gene>